<organism>
    <name type="scientific">Pseudomonas aeruginosa (strain UCBPP-PA14)</name>
    <dbReference type="NCBI Taxonomy" id="208963"/>
    <lineage>
        <taxon>Bacteria</taxon>
        <taxon>Pseudomonadati</taxon>
        <taxon>Pseudomonadota</taxon>
        <taxon>Gammaproteobacteria</taxon>
        <taxon>Pseudomonadales</taxon>
        <taxon>Pseudomonadaceae</taxon>
        <taxon>Pseudomonas</taxon>
    </lineage>
</organism>
<protein>
    <recommendedName>
        <fullName evidence="1">Large ribosomal subunit protein bL9</fullName>
    </recommendedName>
    <alternativeName>
        <fullName evidence="2">50S ribosomal protein L9</fullName>
    </alternativeName>
</protein>
<comment type="function">
    <text evidence="1">Binds to the 23S rRNA.</text>
</comment>
<comment type="similarity">
    <text evidence="1">Belongs to the bacterial ribosomal protein bL9 family.</text>
</comment>
<dbReference type="EMBL" id="CP000438">
    <property type="protein sequence ID" value="ABJ14317.1"/>
    <property type="molecule type" value="Genomic_DNA"/>
</dbReference>
<dbReference type="RefSeq" id="WP_003095627.1">
    <property type="nucleotide sequence ID" value="NZ_CP034244.1"/>
</dbReference>
<dbReference type="SMR" id="Q02F86"/>
<dbReference type="GeneID" id="77223479"/>
<dbReference type="KEGG" id="pau:PA14_65150"/>
<dbReference type="PseudoCAP" id="PA14_65150"/>
<dbReference type="HOGENOM" id="CLU_078938_4_1_6"/>
<dbReference type="BioCyc" id="PAER208963:G1G74-5505-MONOMER"/>
<dbReference type="Proteomes" id="UP000000653">
    <property type="component" value="Chromosome"/>
</dbReference>
<dbReference type="GO" id="GO:1990904">
    <property type="term" value="C:ribonucleoprotein complex"/>
    <property type="evidence" value="ECO:0007669"/>
    <property type="project" value="UniProtKB-KW"/>
</dbReference>
<dbReference type="GO" id="GO:0005840">
    <property type="term" value="C:ribosome"/>
    <property type="evidence" value="ECO:0007669"/>
    <property type="project" value="UniProtKB-KW"/>
</dbReference>
<dbReference type="GO" id="GO:0019843">
    <property type="term" value="F:rRNA binding"/>
    <property type="evidence" value="ECO:0007669"/>
    <property type="project" value="UniProtKB-UniRule"/>
</dbReference>
<dbReference type="GO" id="GO:0003735">
    <property type="term" value="F:structural constituent of ribosome"/>
    <property type="evidence" value="ECO:0007669"/>
    <property type="project" value="InterPro"/>
</dbReference>
<dbReference type="GO" id="GO:0006412">
    <property type="term" value="P:translation"/>
    <property type="evidence" value="ECO:0007669"/>
    <property type="project" value="UniProtKB-UniRule"/>
</dbReference>
<dbReference type="FunFam" id="3.40.5.10:FF:000001">
    <property type="entry name" value="50S ribosomal protein L9"/>
    <property type="match status" value="1"/>
</dbReference>
<dbReference type="Gene3D" id="3.10.430.100">
    <property type="entry name" value="Ribosomal protein L9, C-terminal domain"/>
    <property type="match status" value="1"/>
</dbReference>
<dbReference type="Gene3D" id="3.40.5.10">
    <property type="entry name" value="Ribosomal protein L9, N-terminal domain"/>
    <property type="match status" value="1"/>
</dbReference>
<dbReference type="HAMAP" id="MF_00503">
    <property type="entry name" value="Ribosomal_bL9"/>
    <property type="match status" value="1"/>
</dbReference>
<dbReference type="InterPro" id="IPR000244">
    <property type="entry name" value="Ribosomal_bL9"/>
</dbReference>
<dbReference type="InterPro" id="IPR009027">
    <property type="entry name" value="Ribosomal_bL9/RNase_H1_N"/>
</dbReference>
<dbReference type="InterPro" id="IPR020594">
    <property type="entry name" value="Ribosomal_bL9_bac/chp"/>
</dbReference>
<dbReference type="InterPro" id="IPR020069">
    <property type="entry name" value="Ribosomal_bL9_C"/>
</dbReference>
<dbReference type="InterPro" id="IPR036791">
    <property type="entry name" value="Ribosomal_bL9_C_sf"/>
</dbReference>
<dbReference type="InterPro" id="IPR020070">
    <property type="entry name" value="Ribosomal_bL9_N"/>
</dbReference>
<dbReference type="InterPro" id="IPR036935">
    <property type="entry name" value="Ribosomal_bL9_N_sf"/>
</dbReference>
<dbReference type="NCBIfam" id="TIGR00158">
    <property type="entry name" value="L9"/>
    <property type="match status" value="1"/>
</dbReference>
<dbReference type="PANTHER" id="PTHR21368">
    <property type="entry name" value="50S RIBOSOMAL PROTEIN L9"/>
    <property type="match status" value="1"/>
</dbReference>
<dbReference type="Pfam" id="PF03948">
    <property type="entry name" value="Ribosomal_L9_C"/>
    <property type="match status" value="1"/>
</dbReference>
<dbReference type="Pfam" id="PF01281">
    <property type="entry name" value="Ribosomal_L9_N"/>
    <property type="match status" value="1"/>
</dbReference>
<dbReference type="SUPFAM" id="SSF55658">
    <property type="entry name" value="L9 N-domain-like"/>
    <property type="match status" value="1"/>
</dbReference>
<dbReference type="SUPFAM" id="SSF55653">
    <property type="entry name" value="Ribosomal protein L9 C-domain"/>
    <property type="match status" value="1"/>
</dbReference>
<dbReference type="PROSITE" id="PS00651">
    <property type="entry name" value="RIBOSOMAL_L9"/>
    <property type="match status" value="1"/>
</dbReference>
<accession>Q02F86</accession>
<name>RL9_PSEAB</name>
<reference key="1">
    <citation type="journal article" date="2006" name="Genome Biol.">
        <title>Genomic analysis reveals that Pseudomonas aeruginosa virulence is combinatorial.</title>
        <authorList>
            <person name="Lee D.G."/>
            <person name="Urbach J.M."/>
            <person name="Wu G."/>
            <person name="Liberati N.T."/>
            <person name="Feinbaum R.L."/>
            <person name="Miyata S."/>
            <person name="Diggins L.T."/>
            <person name="He J."/>
            <person name="Saucier M."/>
            <person name="Deziel E."/>
            <person name="Friedman L."/>
            <person name="Li L."/>
            <person name="Grills G."/>
            <person name="Montgomery K."/>
            <person name="Kucherlapati R."/>
            <person name="Rahme L.G."/>
            <person name="Ausubel F.M."/>
        </authorList>
    </citation>
    <scope>NUCLEOTIDE SEQUENCE [LARGE SCALE GENOMIC DNA]</scope>
    <source>
        <strain>UCBPP-PA14</strain>
    </source>
</reference>
<proteinExistence type="inferred from homology"/>
<gene>
    <name evidence="1" type="primary">rplI</name>
    <name type="ordered locus">PA14_65150</name>
</gene>
<keyword id="KW-0687">Ribonucleoprotein</keyword>
<keyword id="KW-0689">Ribosomal protein</keyword>
<keyword id="KW-0694">RNA-binding</keyword>
<keyword id="KW-0699">rRNA-binding</keyword>
<evidence type="ECO:0000255" key="1">
    <source>
        <dbReference type="HAMAP-Rule" id="MF_00503"/>
    </source>
</evidence>
<evidence type="ECO:0000305" key="2"/>
<sequence length="148" mass="15532">MEVILLEKVANLGNLGDKVNIKGGYARNFLLPQGKATVATAENVAAFEARRAELEKAAAEKKAAAEARAAQLSELVVTLGAHAGDEGKLFGSIGTRDIAEAVSAAGYPLEKAEVRLPNGALRNTGEFDVAVHLHTDVETTLKLIIVAE</sequence>
<feature type="chain" id="PRO_1000014837" description="Large ribosomal subunit protein bL9">
    <location>
        <begin position="1"/>
        <end position="148"/>
    </location>
</feature>